<name>KDPC_SALA4</name>
<feature type="chain" id="PRO_1000114737" description="Potassium-transporting ATPase KdpC subunit">
    <location>
        <begin position="1"/>
        <end position="194"/>
    </location>
</feature>
<feature type="transmembrane region" description="Helical" evidence="1">
    <location>
        <begin position="12"/>
        <end position="34"/>
    </location>
</feature>
<proteinExistence type="inferred from homology"/>
<comment type="function">
    <text evidence="1">Part of the high-affinity ATP-driven potassium transport (or Kdp) system, which catalyzes the hydrolysis of ATP coupled with the electrogenic transport of potassium into the cytoplasm. This subunit acts as a catalytic chaperone that increases the ATP-binding affinity of the ATP-hydrolyzing subunit KdpB by the formation of a transient KdpB/KdpC/ATP ternary complex.</text>
</comment>
<comment type="subunit">
    <text evidence="1">The system is composed of three essential subunits: KdpA, KdpB and KdpC.</text>
</comment>
<comment type="subcellular location">
    <subcellularLocation>
        <location evidence="1">Cell inner membrane</location>
        <topology evidence="1">Single-pass membrane protein</topology>
    </subcellularLocation>
</comment>
<comment type="similarity">
    <text evidence="1">Belongs to the KdpC family.</text>
</comment>
<reference key="1">
    <citation type="journal article" date="2011" name="J. Bacteriol.">
        <title>Comparative genomics of 28 Salmonella enterica isolates: evidence for CRISPR-mediated adaptive sublineage evolution.</title>
        <authorList>
            <person name="Fricke W.F."/>
            <person name="Mammel M.K."/>
            <person name="McDermott P.F."/>
            <person name="Tartera C."/>
            <person name="White D.G."/>
            <person name="Leclerc J.E."/>
            <person name="Ravel J."/>
            <person name="Cebula T.A."/>
        </authorList>
    </citation>
    <scope>NUCLEOTIDE SEQUENCE [LARGE SCALE GENOMIC DNA]</scope>
    <source>
        <strain>SL483</strain>
    </source>
</reference>
<evidence type="ECO:0000255" key="1">
    <source>
        <dbReference type="HAMAP-Rule" id="MF_00276"/>
    </source>
</evidence>
<protein>
    <recommendedName>
        <fullName evidence="1">Potassium-transporting ATPase KdpC subunit</fullName>
    </recommendedName>
    <alternativeName>
        <fullName evidence="1">ATP phosphohydrolase [potassium-transporting] C chain</fullName>
    </alternativeName>
    <alternativeName>
        <fullName evidence="1">Potassium-binding and translocating subunit C</fullName>
    </alternativeName>
    <alternativeName>
        <fullName evidence="1">Potassium-translocating ATPase C chain</fullName>
    </alternativeName>
</protein>
<organism>
    <name type="scientific">Salmonella agona (strain SL483)</name>
    <dbReference type="NCBI Taxonomy" id="454166"/>
    <lineage>
        <taxon>Bacteria</taxon>
        <taxon>Pseudomonadati</taxon>
        <taxon>Pseudomonadota</taxon>
        <taxon>Gammaproteobacteria</taxon>
        <taxon>Enterobacterales</taxon>
        <taxon>Enterobacteriaceae</taxon>
        <taxon>Salmonella</taxon>
    </lineage>
</organism>
<sequence>MIGLRPAFSTMLFLLLLTGGVYPLLTTALGQWWFPWQANGSLIHKDNVIRGSALIGQSFTAAGYFHGRPSATADTPYNPLASGGSNLAASNPELDAQIQARVAALRAANPQASSAVPVELATASASGLDNNLTPGAAAWQIPRVAAARQLPVEQVAQLVAEYTHRPLARFLGQPVVNIVELNLALDALQGHRAK</sequence>
<dbReference type="EMBL" id="CP001138">
    <property type="protein sequence ID" value="ACH48708.1"/>
    <property type="molecule type" value="Genomic_DNA"/>
</dbReference>
<dbReference type="RefSeq" id="WP_000579804.1">
    <property type="nucleotide sequence ID" value="NC_011149.1"/>
</dbReference>
<dbReference type="SMR" id="B5EZE2"/>
<dbReference type="KEGG" id="sea:SeAg_B0752"/>
<dbReference type="HOGENOM" id="CLU_077094_2_0_6"/>
<dbReference type="Proteomes" id="UP000008819">
    <property type="component" value="Chromosome"/>
</dbReference>
<dbReference type="GO" id="GO:0005886">
    <property type="term" value="C:plasma membrane"/>
    <property type="evidence" value="ECO:0007669"/>
    <property type="project" value="UniProtKB-SubCell"/>
</dbReference>
<dbReference type="GO" id="GO:0005524">
    <property type="term" value="F:ATP binding"/>
    <property type="evidence" value="ECO:0007669"/>
    <property type="project" value="UniProtKB-UniRule"/>
</dbReference>
<dbReference type="GO" id="GO:0008556">
    <property type="term" value="F:P-type potassium transmembrane transporter activity"/>
    <property type="evidence" value="ECO:0007669"/>
    <property type="project" value="InterPro"/>
</dbReference>
<dbReference type="HAMAP" id="MF_00276">
    <property type="entry name" value="KdpC"/>
    <property type="match status" value="1"/>
</dbReference>
<dbReference type="InterPro" id="IPR003820">
    <property type="entry name" value="KdpC"/>
</dbReference>
<dbReference type="NCBIfam" id="TIGR00681">
    <property type="entry name" value="kdpC"/>
    <property type="match status" value="1"/>
</dbReference>
<dbReference type="NCBIfam" id="NF001454">
    <property type="entry name" value="PRK00315.1"/>
    <property type="match status" value="1"/>
</dbReference>
<dbReference type="PANTHER" id="PTHR30042">
    <property type="entry name" value="POTASSIUM-TRANSPORTING ATPASE C CHAIN"/>
    <property type="match status" value="1"/>
</dbReference>
<dbReference type="PANTHER" id="PTHR30042:SF2">
    <property type="entry name" value="POTASSIUM-TRANSPORTING ATPASE KDPC SUBUNIT"/>
    <property type="match status" value="1"/>
</dbReference>
<dbReference type="Pfam" id="PF02669">
    <property type="entry name" value="KdpC"/>
    <property type="match status" value="1"/>
</dbReference>
<dbReference type="PIRSF" id="PIRSF001296">
    <property type="entry name" value="K_ATPase_KdpC"/>
    <property type="match status" value="1"/>
</dbReference>
<keyword id="KW-0067">ATP-binding</keyword>
<keyword id="KW-0997">Cell inner membrane</keyword>
<keyword id="KW-1003">Cell membrane</keyword>
<keyword id="KW-0406">Ion transport</keyword>
<keyword id="KW-0472">Membrane</keyword>
<keyword id="KW-0547">Nucleotide-binding</keyword>
<keyword id="KW-0630">Potassium</keyword>
<keyword id="KW-0633">Potassium transport</keyword>
<keyword id="KW-0812">Transmembrane</keyword>
<keyword id="KW-1133">Transmembrane helix</keyword>
<keyword id="KW-0813">Transport</keyword>
<gene>
    <name evidence="1" type="primary">kdpC</name>
    <name type="ordered locus">SeAg_B0752</name>
</gene>
<accession>B5EZE2</accession>